<name>ZAT11_ARATH</name>
<keyword id="KW-0479">Metal-binding</keyword>
<keyword id="KW-0539">Nucleus</keyword>
<keyword id="KW-1185">Reference proteome</keyword>
<keyword id="KW-0677">Repeat</keyword>
<keyword id="KW-0804">Transcription</keyword>
<keyword id="KW-0805">Transcription regulation</keyword>
<keyword id="KW-0862">Zinc</keyword>
<keyword id="KW-0863">Zinc-finger</keyword>
<reference key="1">
    <citation type="journal article" date="1999" name="Nature">
        <title>Sequence and analysis of chromosome 2 of the plant Arabidopsis thaliana.</title>
        <authorList>
            <person name="Lin X."/>
            <person name="Kaul S."/>
            <person name="Rounsley S.D."/>
            <person name="Shea T.P."/>
            <person name="Benito M.-I."/>
            <person name="Town C.D."/>
            <person name="Fujii C.Y."/>
            <person name="Mason T.M."/>
            <person name="Bowman C.L."/>
            <person name="Barnstead M.E."/>
            <person name="Feldblyum T.V."/>
            <person name="Buell C.R."/>
            <person name="Ketchum K.A."/>
            <person name="Lee J.J."/>
            <person name="Ronning C.M."/>
            <person name="Koo H.L."/>
            <person name="Moffat K.S."/>
            <person name="Cronin L.A."/>
            <person name="Shen M."/>
            <person name="Pai G."/>
            <person name="Van Aken S."/>
            <person name="Umayam L."/>
            <person name="Tallon L.J."/>
            <person name="Gill J.E."/>
            <person name="Adams M.D."/>
            <person name="Carrera A.J."/>
            <person name="Creasy T.H."/>
            <person name="Goodman H.M."/>
            <person name="Somerville C.R."/>
            <person name="Copenhaver G.P."/>
            <person name="Preuss D."/>
            <person name="Nierman W.C."/>
            <person name="White O."/>
            <person name="Eisen J.A."/>
            <person name="Salzberg S.L."/>
            <person name="Fraser C.M."/>
            <person name="Venter J.C."/>
        </authorList>
    </citation>
    <scope>NUCLEOTIDE SEQUENCE [LARGE SCALE GENOMIC DNA]</scope>
    <source>
        <strain>cv. Columbia</strain>
    </source>
</reference>
<reference key="2">
    <citation type="journal article" date="2017" name="Plant J.">
        <title>Araport11: a complete reannotation of the Arabidopsis thaliana reference genome.</title>
        <authorList>
            <person name="Cheng C.Y."/>
            <person name="Krishnakumar V."/>
            <person name="Chan A.P."/>
            <person name="Thibaud-Nissen F."/>
            <person name="Schobel S."/>
            <person name="Town C.D."/>
        </authorList>
    </citation>
    <scope>GENOME REANNOTATION</scope>
    <source>
        <strain>cv. Columbia</strain>
    </source>
</reference>
<reference key="3">
    <citation type="submission" date="2009-03" db="EMBL/GenBank/DDBJ databases">
        <title>ORF cloning and analysis of Arabidopsis transcription factor genes.</title>
        <authorList>
            <person name="Fujita M."/>
            <person name="Mizukado S."/>
            <person name="Seki M."/>
            <person name="Shinozaki K."/>
            <person name="Mitsuda N."/>
            <person name="Takiguchi Y."/>
            <person name="Takagi M."/>
        </authorList>
    </citation>
    <scope>NUCLEOTIDE SEQUENCE [LARGE SCALE MRNA]</scope>
</reference>
<reference key="4">
    <citation type="journal article" date="1997" name="Plant Mol. Biol.">
        <title>Isolation and characterisation of a diverse family of Arabidopsis two and three-fingered protein genes and cDNA's.</title>
        <authorList>
            <person name="Meissner R."/>
            <person name="Michael A.J."/>
        </authorList>
    </citation>
    <scope>NUCLEOTIDE SEQUENCE [MRNA] OF 5-178</scope>
    <scope>TISSUE SPECIFICITY</scope>
    <source>
        <strain>cv. Columbia</strain>
    </source>
</reference>
<gene>
    <name type="primary">ZAT11</name>
    <name type="ordered locus">At2g37430</name>
    <name type="ORF">F3G5.22</name>
</gene>
<protein>
    <recommendedName>
        <fullName>Zinc finger protein ZAT11</fullName>
    </recommendedName>
</protein>
<proteinExistence type="evidence at transcript level"/>
<evidence type="ECO:0000250" key="1"/>
<evidence type="ECO:0000255" key="2">
    <source>
        <dbReference type="PROSITE-ProRule" id="PRU00042"/>
    </source>
</evidence>
<evidence type="ECO:0000269" key="3">
    <source>
    </source>
</evidence>
<evidence type="ECO:0000305" key="4"/>
<sequence length="178" mass="20230">MKRERSDFEESLKNIDIAKCLMILAQTSMVKQIGLNQHTESHTSNQFECKTCNKRFSSFQALGGHRASHKKPKLTVEQKDVKHLSNDYKGNHFHKCSICSQSFGTGQALGGHMRRHRSSMTVEPSFISPMIPSMPVLKRCGSSKRILSLDLNLTPLENDLEYIFGKTFVPKIDMKFVL</sequence>
<comment type="function">
    <text evidence="1">Probable transcription factor that may be involved in stress responses.</text>
</comment>
<comment type="subcellular location">
    <subcellularLocation>
        <location evidence="4">Nucleus</location>
    </subcellularLocation>
</comment>
<comment type="tissue specificity">
    <text evidence="3">Expressed in leaves.</text>
</comment>
<dbReference type="EMBL" id="AC005896">
    <property type="protein sequence ID" value="AAC98070.1"/>
    <property type="molecule type" value="Genomic_DNA"/>
</dbReference>
<dbReference type="EMBL" id="CP002685">
    <property type="protein sequence ID" value="AEC09397.1"/>
    <property type="molecule type" value="Genomic_DNA"/>
</dbReference>
<dbReference type="EMBL" id="AB493580">
    <property type="protein sequence ID" value="BAH30418.1"/>
    <property type="molecule type" value="mRNA"/>
</dbReference>
<dbReference type="EMBL" id="X98672">
    <property type="protein sequence ID" value="CAA67230.1"/>
    <property type="molecule type" value="mRNA"/>
</dbReference>
<dbReference type="PIR" id="F84792">
    <property type="entry name" value="F84792"/>
</dbReference>
<dbReference type="RefSeq" id="NP_181279.1">
    <property type="nucleotide sequence ID" value="NM_129298.3"/>
</dbReference>
<dbReference type="SMR" id="Q9SLD4"/>
<dbReference type="BioGRID" id="3663">
    <property type="interactions" value="5"/>
</dbReference>
<dbReference type="FunCoup" id="Q9SLD4">
    <property type="interactions" value="2"/>
</dbReference>
<dbReference type="IntAct" id="Q9SLD4">
    <property type="interactions" value="5"/>
</dbReference>
<dbReference type="STRING" id="3702.Q9SLD4"/>
<dbReference type="PaxDb" id="3702-AT2G37430.1"/>
<dbReference type="DNASU" id="818319"/>
<dbReference type="EnsemblPlants" id="AT2G37430.1">
    <property type="protein sequence ID" value="AT2G37430.1"/>
    <property type="gene ID" value="AT2G37430"/>
</dbReference>
<dbReference type="GeneID" id="818319"/>
<dbReference type="Gramene" id="AT2G37430.1">
    <property type="protein sequence ID" value="AT2G37430.1"/>
    <property type="gene ID" value="AT2G37430"/>
</dbReference>
<dbReference type="KEGG" id="ath:AT2G37430"/>
<dbReference type="Araport" id="AT2G37430"/>
<dbReference type="TAIR" id="AT2G37430">
    <property type="gene designation" value="ZAT11"/>
</dbReference>
<dbReference type="eggNOG" id="KOG1721">
    <property type="taxonomic scope" value="Eukaryota"/>
</dbReference>
<dbReference type="HOGENOM" id="CLU_059471_3_0_1"/>
<dbReference type="InParanoid" id="Q9SLD4"/>
<dbReference type="OMA" id="RRVHECP"/>
<dbReference type="OrthoDB" id="9411774at2759"/>
<dbReference type="PhylomeDB" id="Q9SLD4"/>
<dbReference type="PRO" id="PR:Q9SLD4"/>
<dbReference type="Proteomes" id="UP000006548">
    <property type="component" value="Chromosome 2"/>
</dbReference>
<dbReference type="ExpressionAtlas" id="Q9SLD4">
    <property type="expression patterns" value="baseline and differential"/>
</dbReference>
<dbReference type="GO" id="GO:0005634">
    <property type="term" value="C:nucleus"/>
    <property type="evidence" value="ECO:0000314"/>
    <property type="project" value="TAIR"/>
</dbReference>
<dbReference type="GO" id="GO:0003700">
    <property type="term" value="F:DNA-binding transcription factor activity"/>
    <property type="evidence" value="ECO:0000250"/>
    <property type="project" value="TAIR"/>
</dbReference>
<dbReference type="GO" id="GO:0000976">
    <property type="term" value="F:transcription cis-regulatory region binding"/>
    <property type="evidence" value="ECO:0000353"/>
    <property type="project" value="TAIR"/>
</dbReference>
<dbReference type="GO" id="GO:0008270">
    <property type="term" value="F:zinc ion binding"/>
    <property type="evidence" value="ECO:0007669"/>
    <property type="project" value="UniProtKB-KW"/>
</dbReference>
<dbReference type="GO" id="GO:0071289">
    <property type="term" value="P:cellular response to nickel ion"/>
    <property type="evidence" value="ECO:0000315"/>
    <property type="project" value="TAIR"/>
</dbReference>
<dbReference type="GO" id="GO:0006355">
    <property type="term" value="P:regulation of DNA-templated transcription"/>
    <property type="evidence" value="ECO:0000304"/>
    <property type="project" value="TAIR"/>
</dbReference>
<dbReference type="GO" id="GO:2000280">
    <property type="term" value="P:regulation of root development"/>
    <property type="evidence" value="ECO:0000315"/>
    <property type="project" value="TAIR"/>
</dbReference>
<dbReference type="Gene3D" id="3.30.160.60">
    <property type="entry name" value="Classic Zinc Finger"/>
    <property type="match status" value="1"/>
</dbReference>
<dbReference type="InterPro" id="IPR036236">
    <property type="entry name" value="Znf_C2H2_sf"/>
</dbReference>
<dbReference type="InterPro" id="IPR013087">
    <property type="entry name" value="Znf_C2H2_type"/>
</dbReference>
<dbReference type="PANTHER" id="PTHR26374:SF385">
    <property type="entry name" value="ZINC FINGER PROTEIN ZAT11"/>
    <property type="match status" value="1"/>
</dbReference>
<dbReference type="PANTHER" id="PTHR26374">
    <property type="entry name" value="ZINC FINGER PROTEIN ZAT5"/>
    <property type="match status" value="1"/>
</dbReference>
<dbReference type="Pfam" id="PF13912">
    <property type="entry name" value="zf-C2H2_6"/>
    <property type="match status" value="2"/>
</dbReference>
<dbReference type="SMART" id="SM00355">
    <property type="entry name" value="ZnF_C2H2"/>
    <property type="match status" value="2"/>
</dbReference>
<dbReference type="SUPFAM" id="SSF57667">
    <property type="entry name" value="beta-beta-alpha zinc fingers"/>
    <property type="match status" value="1"/>
</dbReference>
<dbReference type="PROSITE" id="PS00028">
    <property type="entry name" value="ZINC_FINGER_C2H2_1"/>
    <property type="match status" value="2"/>
</dbReference>
<dbReference type="PROSITE" id="PS50157">
    <property type="entry name" value="ZINC_FINGER_C2H2_2"/>
    <property type="match status" value="2"/>
</dbReference>
<organism>
    <name type="scientific">Arabidopsis thaliana</name>
    <name type="common">Mouse-ear cress</name>
    <dbReference type="NCBI Taxonomy" id="3702"/>
    <lineage>
        <taxon>Eukaryota</taxon>
        <taxon>Viridiplantae</taxon>
        <taxon>Streptophyta</taxon>
        <taxon>Embryophyta</taxon>
        <taxon>Tracheophyta</taxon>
        <taxon>Spermatophyta</taxon>
        <taxon>Magnoliopsida</taxon>
        <taxon>eudicotyledons</taxon>
        <taxon>Gunneridae</taxon>
        <taxon>Pentapetalae</taxon>
        <taxon>rosids</taxon>
        <taxon>malvids</taxon>
        <taxon>Brassicales</taxon>
        <taxon>Brassicaceae</taxon>
        <taxon>Camelineae</taxon>
        <taxon>Arabidopsis</taxon>
    </lineage>
</organism>
<accession>Q9SLD4</accession>
<accession>Q39217</accession>
<feature type="chain" id="PRO_0000409720" description="Zinc finger protein ZAT11">
    <location>
        <begin position="1"/>
        <end position="178"/>
    </location>
</feature>
<feature type="zinc finger region" description="C2H2-type 1" evidence="2">
    <location>
        <begin position="47"/>
        <end position="69"/>
    </location>
</feature>
<feature type="zinc finger region" description="C2H2-type 2" evidence="2">
    <location>
        <begin position="94"/>
        <end position="116"/>
    </location>
</feature>